<dbReference type="EMBL" id="BX842641">
    <property type="protein sequence ID" value="CAE76603.1"/>
    <property type="molecule type" value="Genomic_DNA"/>
</dbReference>
<dbReference type="EMBL" id="CM002236">
    <property type="protein sequence ID" value="EAA36496.1"/>
    <property type="molecule type" value="Genomic_DNA"/>
</dbReference>
<dbReference type="RefSeq" id="XP_965732.1">
    <property type="nucleotide sequence ID" value="XM_960639.2"/>
</dbReference>
<dbReference type="SMR" id="Q7SI59"/>
<dbReference type="STRING" id="367110.Q7SI59"/>
<dbReference type="PaxDb" id="5141-EFNCRP00000000947"/>
<dbReference type="EnsemblFungi" id="EAA36496">
    <property type="protein sequence ID" value="EAA36496"/>
    <property type="gene ID" value="NCU00592"/>
</dbReference>
<dbReference type="GeneID" id="3881874"/>
<dbReference type="KEGG" id="ncr:NCU00592"/>
<dbReference type="VEuPathDB" id="FungiDB:NCU00592"/>
<dbReference type="HOGENOM" id="CLU_025093_0_0_1"/>
<dbReference type="InParanoid" id="Q7SI59"/>
<dbReference type="OrthoDB" id="21123at2759"/>
<dbReference type="Proteomes" id="UP000001805">
    <property type="component" value="Chromosome 1, Linkage Group I"/>
</dbReference>
<dbReference type="GO" id="GO:0005684">
    <property type="term" value="C:U2-type spliceosomal complex"/>
    <property type="evidence" value="ECO:0000318"/>
    <property type="project" value="GO_Central"/>
</dbReference>
<dbReference type="GO" id="GO:0000398">
    <property type="term" value="P:mRNA splicing, via spliceosome"/>
    <property type="evidence" value="ECO:0000318"/>
    <property type="project" value="GO_Central"/>
</dbReference>
<dbReference type="InterPro" id="IPR019339">
    <property type="entry name" value="CIR_N_dom"/>
</dbReference>
<dbReference type="InterPro" id="IPR022209">
    <property type="entry name" value="CWC25"/>
</dbReference>
<dbReference type="InterPro" id="IPR051376">
    <property type="entry name" value="CWC25_splicing_factor"/>
</dbReference>
<dbReference type="PANTHER" id="PTHR16196">
    <property type="entry name" value="CELL CYCLE CONTROL PROTEIN CWF25"/>
    <property type="match status" value="1"/>
</dbReference>
<dbReference type="PANTHER" id="PTHR16196:SF0">
    <property type="entry name" value="PRE-MRNA-SPLICING FACTOR CWC25 HOMOLOG"/>
    <property type="match status" value="1"/>
</dbReference>
<dbReference type="Pfam" id="PF10197">
    <property type="entry name" value="Cir_N"/>
    <property type="match status" value="1"/>
</dbReference>
<dbReference type="Pfam" id="PF12542">
    <property type="entry name" value="CWC25"/>
    <property type="match status" value="1"/>
</dbReference>
<dbReference type="SMART" id="SM01083">
    <property type="entry name" value="Cir_N"/>
    <property type="match status" value="1"/>
</dbReference>
<organism>
    <name type="scientific">Neurospora crassa (strain ATCC 24698 / 74-OR23-1A / CBS 708.71 / DSM 1257 / FGSC 987)</name>
    <dbReference type="NCBI Taxonomy" id="367110"/>
    <lineage>
        <taxon>Eukaryota</taxon>
        <taxon>Fungi</taxon>
        <taxon>Dikarya</taxon>
        <taxon>Ascomycota</taxon>
        <taxon>Pezizomycotina</taxon>
        <taxon>Sordariomycetes</taxon>
        <taxon>Sordariomycetidae</taxon>
        <taxon>Sordariales</taxon>
        <taxon>Sordariaceae</taxon>
        <taxon>Neurospora</taxon>
    </lineage>
</organism>
<reference key="1">
    <citation type="journal article" date="2003" name="Nucleic Acids Res.">
        <title>What's in the genome of a filamentous fungus? Analysis of the Neurospora genome sequence.</title>
        <authorList>
            <person name="Mannhaupt G."/>
            <person name="Montrone C."/>
            <person name="Haase D."/>
            <person name="Mewes H.-W."/>
            <person name="Aign V."/>
            <person name="Hoheisel J.D."/>
            <person name="Fartmann B."/>
            <person name="Nyakatura G."/>
            <person name="Kempken F."/>
            <person name="Maier J."/>
            <person name="Schulte U."/>
        </authorList>
    </citation>
    <scope>NUCLEOTIDE SEQUENCE [LARGE SCALE GENOMIC DNA]</scope>
    <source>
        <strain>ATCC 24698 / 74-OR23-1A / CBS 708.71 / DSM 1257 / FGSC 987</strain>
    </source>
</reference>
<reference key="2">
    <citation type="journal article" date="2003" name="Nature">
        <title>The genome sequence of the filamentous fungus Neurospora crassa.</title>
        <authorList>
            <person name="Galagan J.E."/>
            <person name="Calvo S.E."/>
            <person name="Borkovich K.A."/>
            <person name="Selker E.U."/>
            <person name="Read N.D."/>
            <person name="Jaffe D.B."/>
            <person name="FitzHugh W."/>
            <person name="Ma L.-J."/>
            <person name="Smirnov S."/>
            <person name="Purcell S."/>
            <person name="Rehman B."/>
            <person name="Elkins T."/>
            <person name="Engels R."/>
            <person name="Wang S."/>
            <person name="Nielsen C.B."/>
            <person name="Butler J."/>
            <person name="Endrizzi M."/>
            <person name="Qui D."/>
            <person name="Ianakiev P."/>
            <person name="Bell-Pedersen D."/>
            <person name="Nelson M.A."/>
            <person name="Werner-Washburne M."/>
            <person name="Selitrennikoff C.P."/>
            <person name="Kinsey J.A."/>
            <person name="Braun E.L."/>
            <person name="Zelter A."/>
            <person name="Schulte U."/>
            <person name="Kothe G.O."/>
            <person name="Jedd G."/>
            <person name="Mewes H.-W."/>
            <person name="Staben C."/>
            <person name="Marcotte E."/>
            <person name="Greenberg D."/>
            <person name="Roy A."/>
            <person name="Foley K."/>
            <person name="Naylor J."/>
            <person name="Stange-Thomann N."/>
            <person name="Barrett R."/>
            <person name="Gnerre S."/>
            <person name="Kamal M."/>
            <person name="Kamvysselis M."/>
            <person name="Mauceli E.W."/>
            <person name="Bielke C."/>
            <person name="Rudd S."/>
            <person name="Frishman D."/>
            <person name="Krystofova S."/>
            <person name="Rasmussen C."/>
            <person name="Metzenberg R.L."/>
            <person name="Perkins D.D."/>
            <person name="Kroken S."/>
            <person name="Cogoni C."/>
            <person name="Macino G."/>
            <person name="Catcheside D.E.A."/>
            <person name="Li W."/>
            <person name="Pratt R.J."/>
            <person name="Osmani S.A."/>
            <person name="DeSouza C.P.C."/>
            <person name="Glass N.L."/>
            <person name="Orbach M.J."/>
            <person name="Berglund J.A."/>
            <person name="Voelker R."/>
            <person name="Yarden O."/>
            <person name="Plamann M."/>
            <person name="Seiler S."/>
            <person name="Dunlap J.C."/>
            <person name="Radford A."/>
            <person name="Aramayo R."/>
            <person name="Natvig D.O."/>
            <person name="Alex L.A."/>
            <person name="Mannhaupt G."/>
            <person name="Ebbole D.J."/>
            <person name="Freitag M."/>
            <person name="Paulsen I."/>
            <person name="Sachs M.S."/>
            <person name="Lander E.S."/>
            <person name="Nusbaum C."/>
            <person name="Birren B.W."/>
        </authorList>
    </citation>
    <scope>NUCLEOTIDE SEQUENCE [LARGE SCALE GENOMIC DNA]</scope>
    <source>
        <strain>ATCC 24698 / 74-OR23-1A / CBS 708.71 / DSM 1257 / FGSC 987</strain>
    </source>
</reference>
<evidence type="ECO:0000250" key="1"/>
<evidence type="ECO:0000255" key="2"/>
<evidence type="ECO:0000256" key="3">
    <source>
        <dbReference type="SAM" id="MobiDB-lite"/>
    </source>
</evidence>
<evidence type="ECO:0000305" key="4"/>
<proteinExistence type="inferred from homology"/>
<keyword id="KW-0175">Coiled coil</keyword>
<keyword id="KW-0507">mRNA processing</keyword>
<keyword id="KW-0508">mRNA splicing</keyword>
<keyword id="KW-0539">Nucleus</keyword>
<keyword id="KW-1185">Reference proteome</keyword>
<keyword id="KW-0747">Spliceosome</keyword>
<sequence>MGSGDLNMKKSWHPQRSGNVAATQKAEAEAIAERKKLQQRLQEIEEERRKEEIQKALEAAGGKRKIDRVEWMYSGPTDGQAGDSAETEAYLLGKRRIDKLLQDNDTKKALSKQSQQDVLSAAGPAPVVTNARDVATKIREDPLLAIKRQEQQAYEAMMNDPIKRRQLLASMGIDDSQIAAKGGKEQRRHKHRSHHHRSDRHRDRDDDRDRDSARDRDRDRHSRRRRSDSRDRSRSRSPRRRSDSEEDRSKQRRRDSPDRTRRRDRDQSRSRGNRDRDDDRSRRHRFPQGRSRSRSGSPGGRSSRRREYSRERDSGGPSSRRDDRNSRDQNRPRRDYAKEDEQPKYDGGLNKGGRRQQQPDGDHKNAEEERAKKLAAMQAAATDLDKAREERLKALAEAERAEREADEKARQQNKKFRGGDAGFMSGLHSRAADMKIADRMNGRV</sequence>
<gene>
    <name type="primary">msp-6</name>
    <name type="synonym">cwc25</name>
    <name type="ORF">B22I21.170</name>
    <name type="ORF">NCU00592</name>
</gene>
<protein>
    <recommendedName>
        <fullName>Pre-mRNA-splicing factor cwc25</fullName>
    </recommendedName>
    <alternativeName>
        <fullName>mRNA-splicing protein 6</fullName>
    </alternativeName>
</protein>
<name>CWC25_NEUCR</name>
<feature type="chain" id="PRO_0000079592" description="Pre-mRNA-splicing factor cwc25">
    <location>
        <begin position="1"/>
        <end position="444"/>
    </location>
</feature>
<feature type="region of interest" description="Disordered" evidence="3">
    <location>
        <begin position="1"/>
        <end position="27"/>
    </location>
</feature>
<feature type="region of interest" description="Disordered" evidence="3">
    <location>
        <begin position="168"/>
        <end position="385"/>
    </location>
</feature>
<feature type="region of interest" description="Disordered" evidence="3">
    <location>
        <begin position="397"/>
        <end position="425"/>
    </location>
</feature>
<feature type="coiled-coil region" evidence="2">
    <location>
        <begin position="19"/>
        <end position="65"/>
    </location>
</feature>
<feature type="coiled-coil region" evidence="2">
    <location>
        <begin position="364"/>
        <end position="417"/>
    </location>
</feature>
<feature type="compositionally biased region" description="Basic residues" evidence="3">
    <location>
        <begin position="186"/>
        <end position="199"/>
    </location>
</feature>
<feature type="compositionally biased region" description="Basic and acidic residues" evidence="3">
    <location>
        <begin position="200"/>
        <end position="220"/>
    </location>
</feature>
<feature type="compositionally biased region" description="Basic and acidic residues" evidence="3">
    <location>
        <begin position="228"/>
        <end position="281"/>
    </location>
</feature>
<feature type="compositionally biased region" description="Basic residues" evidence="3">
    <location>
        <begin position="282"/>
        <end position="293"/>
    </location>
</feature>
<feature type="compositionally biased region" description="Basic and acidic residues" evidence="3">
    <location>
        <begin position="305"/>
        <end position="344"/>
    </location>
</feature>
<feature type="compositionally biased region" description="Basic and acidic residues" evidence="3">
    <location>
        <begin position="360"/>
        <end position="372"/>
    </location>
</feature>
<feature type="compositionally biased region" description="Basic and acidic residues" evidence="3">
    <location>
        <begin position="397"/>
        <end position="410"/>
    </location>
</feature>
<comment type="function">
    <text evidence="1">Involved in pre-mRNA splicing.</text>
</comment>
<comment type="subunit">
    <text evidence="1">Associated with the spliceosome.</text>
</comment>
<comment type="subcellular location">
    <subcellularLocation>
        <location evidence="1">Nucleus</location>
    </subcellularLocation>
</comment>
<comment type="similarity">
    <text evidence="4">Belongs to the CWC25 family.</text>
</comment>
<accession>Q7SI59</accession>